<dbReference type="EC" id="3.5.2.5"/>
<dbReference type="EMBL" id="AAFI02000005">
    <property type="protein sequence ID" value="EAL72431.1"/>
    <property type="molecule type" value="Genomic_DNA"/>
</dbReference>
<dbReference type="RefSeq" id="XP_646590.1">
    <property type="nucleotide sequence ID" value="XM_641498.1"/>
</dbReference>
<dbReference type="SMR" id="Q55C91"/>
<dbReference type="FunCoup" id="Q55C91">
    <property type="interactions" value="2"/>
</dbReference>
<dbReference type="STRING" id="44689.Q55C91"/>
<dbReference type="PaxDb" id="44689-DDB0231351"/>
<dbReference type="EnsemblProtists" id="EAL72431">
    <property type="protein sequence ID" value="EAL72431"/>
    <property type="gene ID" value="DDB_G0270162"/>
</dbReference>
<dbReference type="GeneID" id="8617561"/>
<dbReference type="KEGG" id="ddi:DDB_G0270162"/>
<dbReference type="dictyBase" id="DDB_G0270162">
    <property type="gene designation" value="allB2"/>
</dbReference>
<dbReference type="VEuPathDB" id="AmoebaDB:DDB_G0270162"/>
<dbReference type="eggNOG" id="KOG2584">
    <property type="taxonomic scope" value="Eukaryota"/>
</dbReference>
<dbReference type="HOGENOM" id="CLU_015572_4_0_1"/>
<dbReference type="InParanoid" id="Q55C91"/>
<dbReference type="OMA" id="SRLHVCH"/>
<dbReference type="PhylomeDB" id="Q55C91"/>
<dbReference type="UniPathway" id="UPA00395">
    <property type="reaction ID" value="UER00653"/>
</dbReference>
<dbReference type="PRO" id="PR:Q55C91"/>
<dbReference type="Proteomes" id="UP000002195">
    <property type="component" value="Chromosome 1"/>
</dbReference>
<dbReference type="GO" id="GO:0005737">
    <property type="term" value="C:cytoplasm"/>
    <property type="evidence" value="ECO:0000318"/>
    <property type="project" value="GO_Central"/>
</dbReference>
<dbReference type="GO" id="GO:0004038">
    <property type="term" value="F:allantoinase activity"/>
    <property type="evidence" value="ECO:0000250"/>
    <property type="project" value="dictyBase"/>
</dbReference>
<dbReference type="GO" id="GO:0050897">
    <property type="term" value="F:cobalt ion binding"/>
    <property type="evidence" value="ECO:0007669"/>
    <property type="project" value="InterPro"/>
</dbReference>
<dbReference type="GO" id="GO:0008270">
    <property type="term" value="F:zinc ion binding"/>
    <property type="evidence" value="ECO:0007669"/>
    <property type="project" value="InterPro"/>
</dbReference>
<dbReference type="GO" id="GO:0000256">
    <property type="term" value="P:allantoin catabolic process"/>
    <property type="evidence" value="ECO:0000250"/>
    <property type="project" value="dictyBase"/>
</dbReference>
<dbReference type="GO" id="GO:0006145">
    <property type="term" value="P:purine nucleobase catabolic process"/>
    <property type="evidence" value="ECO:0000318"/>
    <property type="project" value="GO_Central"/>
</dbReference>
<dbReference type="FunFam" id="3.20.20.140:FF:000122">
    <property type="entry name" value="Probable allantoinase 2"/>
    <property type="match status" value="1"/>
</dbReference>
<dbReference type="Gene3D" id="3.20.20.140">
    <property type="entry name" value="Metal-dependent hydrolases"/>
    <property type="match status" value="1"/>
</dbReference>
<dbReference type="InterPro" id="IPR017593">
    <property type="entry name" value="Allantoinase"/>
</dbReference>
<dbReference type="InterPro" id="IPR006680">
    <property type="entry name" value="Amidohydro-rel"/>
</dbReference>
<dbReference type="InterPro" id="IPR050138">
    <property type="entry name" value="DHOase/Allantoinase_Hydrolase"/>
</dbReference>
<dbReference type="InterPro" id="IPR002195">
    <property type="entry name" value="Dihydroorotase_CS"/>
</dbReference>
<dbReference type="InterPro" id="IPR011059">
    <property type="entry name" value="Metal-dep_hydrolase_composite"/>
</dbReference>
<dbReference type="InterPro" id="IPR032466">
    <property type="entry name" value="Metal_Hydrolase"/>
</dbReference>
<dbReference type="NCBIfam" id="TIGR03178">
    <property type="entry name" value="allantoinase"/>
    <property type="match status" value="1"/>
</dbReference>
<dbReference type="PANTHER" id="PTHR43668">
    <property type="entry name" value="ALLANTOINASE"/>
    <property type="match status" value="1"/>
</dbReference>
<dbReference type="PANTHER" id="PTHR43668:SF2">
    <property type="entry name" value="ALLANTOINASE"/>
    <property type="match status" value="1"/>
</dbReference>
<dbReference type="Pfam" id="PF01979">
    <property type="entry name" value="Amidohydro_1"/>
    <property type="match status" value="1"/>
</dbReference>
<dbReference type="SUPFAM" id="SSF51338">
    <property type="entry name" value="Composite domain of metallo-dependent hydrolases"/>
    <property type="match status" value="1"/>
</dbReference>
<dbReference type="SUPFAM" id="SSF51556">
    <property type="entry name" value="Metallo-dependent hydrolases"/>
    <property type="match status" value="1"/>
</dbReference>
<dbReference type="PROSITE" id="PS00482">
    <property type="entry name" value="DIHYDROOROTASE_1"/>
    <property type="match status" value="1"/>
</dbReference>
<accession>Q55C91</accession>
<reference key="1">
    <citation type="journal article" date="2005" name="Nature">
        <title>The genome of the social amoeba Dictyostelium discoideum.</title>
        <authorList>
            <person name="Eichinger L."/>
            <person name="Pachebat J.A."/>
            <person name="Gloeckner G."/>
            <person name="Rajandream M.A."/>
            <person name="Sucgang R."/>
            <person name="Berriman M."/>
            <person name="Song J."/>
            <person name="Olsen R."/>
            <person name="Szafranski K."/>
            <person name="Xu Q."/>
            <person name="Tunggal B."/>
            <person name="Kummerfeld S."/>
            <person name="Madera M."/>
            <person name="Konfortov B.A."/>
            <person name="Rivero F."/>
            <person name="Bankier A.T."/>
            <person name="Lehmann R."/>
            <person name="Hamlin N."/>
            <person name="Davies R."/>
            <person name="Gaudet P."/>
            <person name="Fey P."/>
            <person name="Pilcher K."/>
            <person name="Chen G."/>
            <person name="Saunders D."/>
            <person name="Sodergren E.J."/>
            <person name="Davis P."/>
            <person name="Kerhornou A."/>
            <person name="Nie X."/>
            <person name="Hall N."/>
            <person name="Anjard C."/>
            <person name="Hemphill L."/>
            <person name="Bason N."/>
            <person name="Farbrother P."/>
            <person name="Desany B."/>
            <person name="Just E."/>
            <person name="Morio T."/>
            <person name="Rost R."/>
            <person name="Churcher C.M."/>
            <person name="Cooper J."/>
            <person name="Haydock S."/>
            <person name="van Driessche N."/>
            <person name="Cronin A."/>
            <person name="Goodhead I."/>
            <person name="Muzny D.M."/>
            <person name="Mourier T."/>
            <person name="Pain A."/>
            <person name="Lu M."/>
            <person name="Harper D."/>
            <person name="Lindsay R."/>
            <person name="Hauser H."/>
            <person name="James K.D."/>
            <person name="Quiles M."/>
            <person name="Madan Babu M."/>
            <person name="Saito T."/>
            <person name="Buchrieser C."/>
            <person name="Wardroper A."/>
            <person name="Felder M."/>
            <person name="Thangavelu M."/>
            <person name="Johnson D."/>
            <person name="Knights A."/>
            <person name="Loulseged H."/>
            <person name="Mungall K.L."/>
            <person name="Oliver K."/>
            <person name="Price C."/>
            <person name="Quail M.A."/>
            <person name="Urushihara H."/>
            <person name="Hernandez J."/>
            <person name="Rabbinowitsch E."/>
            <person name="Steffen D."/>
            <person name="Sanders M."/>
            <person name="Ma J."/>
            <person name="Kohara Y."/>
            <person name="Sharp S."/>
            <person name="Simmonds M.N."/>
            <person name="Spiegler S."/>
            <person name="Tivey A."/>
            <person name="Sugano S."/>
            <person name="White B."/>
            <person name="Walker D."/>
            <person name="Woodward J.R."/>
            <person name="Winckler T."/>
            <person name="Tanaka Y."/>
            <person name="Shaulsky G."/>
            <person name="Schleicher M."/>
            <person name="Weinstock G.M."/>
            <person name="Rosenthal A."/>
            <person name="Cox E.C."/>
            <person name="Chisholm R.L."/>
            <person name="Gibbs R.A."/>
            <person name="Loomis W.F."/>
            <person name="Platzer M."/>
            <person name="Kay R.R."/>
            <person name="Williams J.G."/>
            <person name="Dear P.H."/>
            <person name="Noegel A.A."/>
            <person name="Barrell B.G."/>
            <person name="Kuspa A."/>
        </authorList>
    </citation>
    <scope>NUCLEOTIDE SEQUENCE [LARGE SCALE GENOMIC DNA]</scope>
    <source>
        <strain>AX4</strain>
    </source>
</reference>
<proteinExistence type="inferred from homology"/>
<comment type="catalytic activity">
    <reaction>
        <text>(S)-allantoin + H2O = allantoate + H(+)</text>
        <dbReference type="Rhea" id="RHEA:17029"/>
        <dbReference type="ChEBI" id="CHEBI:15377"/>
        <dbReference type="ChEBI" id="CHEBI:15378"/>
        <dbReference type="ChEBI" id="CHEBI:15678"/>
        <dbReference type="ChEBI" id="CHEBI:17536"/>
        <dbReference type="EC" id="3.5.2.5"/>
    </reaction>
</comment>
<comment type="cofactor">
    <cofactor evidence="1">
        <name>Zn(2+)</name>
        <dbReference type="ChEBI" id="CHEBI:29105"/>
    </cofactor>
    <text evidence="1">Binds 2 Zn(2+) ions per subunit.</text>
</comment>
<comment type="pathway">
    <text>Nitrogen metabolism; (S)-allantoin degradation; allantoate from (S)-allantoin: step 1/1.</text>
</comment>
<comment type="subunit">
    <text evidence="1">Homotetramer.</text>
</comment>
<comment type="PTM">
    <text evidence="1">Carboxylation allows a single lysine to coordinate two zinc ions.</text>
</comment>
<comment type="similarity">
    <text evidence="2">Belongs to the metallo-dependent hydrolases superfamily. Allantoinase family.</text>
</comment>
<keyword id="KW-0378">Hydrolase</keyword>
<keyword id="KW-0479">Metal-binding</keyword>
<keyword id="KW-0659">Purine metabolism</keyword>
<keyword id="KW-1185">Reference proteome</keyword>
<keyword id="KW-0862">Zinc</keyword>
<evidence type="ECO:0000250" key="1"/>
<evidence type="ECO:0000305" key="2"/>
<organism>
    <name type="scientific">Dictyostelium discoideum</name>
    <name type="common">Social amoeba</name>
    <dbReference type="NCBI Taxonomy" id="44689"/>
    <lineage>
        <taxon>Eukaryota</taxon>
        <taxon>Amoebozoa</taxon>
        <taxon>Evosea</taxon>
        <taxon>Eumycetozoa</taxon>
        <taxon>Dictyostelia</taxon>
        <taxon>Dictyosteliales</taxon>
        <taxon>Dictyosteliaceae</taxon>
        <taxon>Dictyostelium</taxon>
    </lineage>
</organism>
<sequence length="510" mass="57323">MEIWKVIFSIWFLLFQNFVLSAKNDDNKLKVIRGRNVIYNGNVIPLSILIRNGKTIGIKDYSFNPKKLNENYEILYDDRECNNNEDFIIMGGLVDSHVHVNEPGRTEWEGFESATSAAAAGGVTTIVDMPLNSSPVTTSFKNLLDKIESMKGKLRVDVGLLGGIVPGNSKEIKKMVLQGGVLGFKSFLLPSGIDEFPPVNENDIQEAMNEMKLLKCQYNNSDVIMMFHAEVEEPIKEATVRLKNENADPKLYKTYLDSRPKISENQAISKLIDITRQNQIVSTHIVHLSSSESIEQIREAMDQGVPISAETTYNYLHLTSESVPYGNTLFKSAPPVREHENKELLWNAIINGTIKLIVSDHSPCTINLKQLKEDNQSIGDFLKAWGGISSLELGLPIIWTECKNRGIPITQLSEWLSNGPSKLVGLNDRKGSIEIGRDADFVIFNPNESFIVNEKKLFLKNKFSAYNGEKLFGVVYETILRGNSIFKKGDNKIKKIIGQRLIKSNLINKK</sequence>
<feature type="chain" id="PRO_0000330751" description="Probable allantoinase 2">
    <location>
        <begin position="1"/>
        <end position="510"/>
    </location>
</feature>
<feature type="binding site" evidence="1">
    <location>
        <position position="97"/>
    </location>
    <ligand>
        <name>Zn(2+)</name>
        <dbReference type="ChEBI" id="CHEBI:29105"/>
        <label>1</label>
    </ligand>
</feature>
<feature type="binding site" evidence="1">
    <location>
        <position position="99"/>
    </location>
    <ligand>
        <name>Zn(2+)</name>
        <dbReference type="ChEBI" id="CHEBI:29105"/>
        <label>1</label>
    </ligand>
</feature>
<feature type="binding site" description="via carbamate group" evidence="1">
    <location>
        <position position="185"/>
    </location>
    <ligand>
        <name>Zn(2+)</name>
        <dbReference type="ChEBI" id="CHEBI:29105"/>
        <label>1</label>
    </ligand>
</feature>
<feature type="binding site" description="via carbamate group" evidence="1">
    <location>
        <position position="185"/>
    </location>
    <ligand>
        <name>Zn(2+)</name>
        <dbReference type="ChEBI" id="CHEBI:29105"/>
        <label>2</label>
    </ligand>
</feature>
<feature type="binding site" evidence="1">
    <location>
        <position position="228"/>
    </location>
    <ligand>
        <name>Zn(2+)</name>
        <dbReference type="ChEBI" id="CHEBI:29105"/>
        <label>2</label>
    </ligand>
</feature>
<feature type="binding site" evidence="1">
    <location>
        <position position="287"/>
    </location>
    <ligand>
        <name>Zn(2+)</name>
        <dbReference type="ChEBI" id="CHEBI:29105"/>
        <label>2</label>
    </ligand>
</feature>
<feature type="binding site" evidence="1">
    <location>
        <position position="360"/>
    </location>
    <ligand>
        <name>Zn(2+)</name>
        <dbReference type="ChEBI" id="CHEBI:29105"/>
        <label>1</label>
    </ligand>
</feature>
<feature type="modified residue" description="N6-carboxylysine" evidence="1">
    <location>
        <position position="185"/>
    </location>
</feature>
<name>ALN2_DICDI</name>
<protein>
    <recommendedName>
        <fullName>Probable allantoinase 2</fullName>
        <ecNumber>3.5.2.5</ecNumber>
    </recommendedName>
</protein>
<gene>
    <name type="primary">allB2</name>
    <name type="ORF">DDB_G0270162</name>
</gene>